<dbReference type="EC" id="4.2.3.120" evidence="4"/>
<dbReference type="EC" id="4.2.3.119" evidence="4"/>
<dbReference type="EMBL" id="JQ240292">
    <property type="protein sequence ID" value="AFU73844.1"/>
    <property type="molecule type" value="mRNA"/>
</dbReference>
<dbReference type="SMR" id="R9QMW5"/>
<dbReference type="BRENDA" id="4.2.3.119">
    <property type="organism ID" value="4842"/>
</dbReference>
<dbReference type="BRENDA" id="4.2.3.120">
    <property type="organism ID" value="4842"/>
</dbReference>
<dbReference type="UniPathway" id="UPA00213"/>
<dbReference type="UniPathway" id="UPA00924"/>
<dbReference type="GO" id="GO:0009507">
    <property type="term" value="C:chloroplast"/>
    <property type="evidence" value="ECO:0007669"/>
    <property type="project" value="UniProtKB-SubCell"/>
</dbReference>
<dbReference type="GO" id="GO:0000287">
    <property type="term" value="F:magnesium ion binding"/>
    <property type="evidence" value="ECO:0007669"/>
    <property type="project" value="InterPro"/>
</dbReference>
<dbReference type="GO" id="GO:0050550">
    <property type="term" value="F:pinene synthase activity"/>
    <property type="evidence" value="ECO:0000314"/>
    <property type="project" value="UniProtKB"/>
</dbReference>
<dbReference type="GO" id="GO:0010333">
    <property type="term" value="F:terpene synthase activity"/>
    <property type="evidence" value="ECO:0000314"/>
    <property type="project" value="UniProtKB"/>
</dbReference>
<dbReference type="GO" id="GO:0018867">
    <property type="term" value="P:alpha-pinene metabolic process"/>
    <property type="evidence" value="ECO:0000314"/>
    <property type="project" value="UniProtKB"/>
</dbReference>
<dbReference type="GO" id="GO:0016102">
    <property type="term" value="P:diterpenoid biosynthetic process"/>
    <property type="evidence" value="ECO:0007669"/>
    <property type="project" value="InterPro"/>
</dbReference>
<dbReference type="GO" id="GO:0010597">
    <property type="term" value="P:green leaf volatile biosynthetic process"/>
    <property type="evidence" value="ECO:0000314"/>
    <property type="project" value="UniProtKB"/>
</dbReference>
<dbReference type="GO" id="GO:0016114">
    <property type="term" value="P:terpenoid biosynthetic process"/>
    <property type="evidence" value="ECO:0000314"/>
    <property type="project" value="UniProtKB"/>
</dbReference>
<dbReference type="CDD" id="cd00684">
    <property type="entry name" value="Terpene_cyclase_plant_C1"/>
    <property type="match status" value="1"/>
</dbReference>
<dbReference type="FunFam" id="1.50.10.130:FF:000004">
    <property type="entry name" value="Carene synthase, chloroplastic"/>
    <property type="match status" value="1"/>
</dbReference>
<dbReference type="FunFam" id="1.10.600.10:FF:000005">
    <property type="entry name" value="Ent-kaur-16-ene synthase, chloroplastic"/>
    <property type="match status" value="1"/>
</dbReference>
<dbReference type="Gene3D" id="1.10.600.10">
    <property type="entry name" value="Farnesyl Diphosphate Synthase"/>
    <property type="match status" value="1"/>
</dbReference>
<dbReference type="Gene3D" id="1.50.10.130">
    <property type="entry name" value="Terpene synthase, N-terminal domain"/>
    <property type="match status" value="1"/>
</dbReference>
<dbReference type="InterPro" id="IPR008949">
    <property type="entry name" value="Isoprenoid_synthase_dom_sf"/>
</dbReference>
<dbReference type="InterPro" id="IPR034741">
    <property type="entry name" value="Terpene_cyclase-like_1_C"/>
</dbReference>
<dbReference type="InterPro" id="IPR044814">
    <property type="entry name" value="Terpene_cyclase_plant_C1"/>
</dbReference>
<dbReference type="InterPro" id="IPR001906">
    <property type="entry name" value="Terpene_synth_N"/>
</dbReference>
<dbReference type="InterPro" id="IPR036965">
    <property type="entry name" value="Terpene_synth_N_sf"/>
</dbReference>
<dbReference type="InterPro" id="IPR050148">
    <property type="entry name" value="Terpene_synthase-like"/>
</dbReference>
<dbReference type="InterPro" id="IPR005630">
    <property type="entry name" value="Terpene_synthase_metal-bd"/>
</dbReference>
<dbReference type="InterPro" id="IPR008930">
    <property type="entry name" value="Terpenoid_cyclase/PrenylTrfase"/>
</dbReference>
<dbReference type="PANTHER" id="PTHR31225">
    <property type="entry name" value="OS04G0344100 PROTEIN-RELATED"/>
    <property type="match status" value="1"/>
</dbReference>
<dbReference type="PANTHER" id="PTHR31225:SF98">
    <property type="entry name" value="TERPENE SYNTHASE 9-RELATED"/>
    <property type="match status" value="1"/>
</dbReference>
<dbReference type="Pfam" id="PF01397">
    <property type="entry name" value="Terpene_synth"/>
    <property type="match status" value="1"/>
</dbReference>
<dbReference type="Pfam" id="PF03936">
    <property type="entry name" value="Terpene_synth_C"/>
    <property type="match status" value="1"/>
</dbReference>
<dbReference type="SFLD" id="SFLDS00005">
    <property type="entry name" value="Isoprenoid_Synthase_Type_I"/>
    <property type="match status" value="1"/>
</dbReference>
<dbReference type="SFLD" id="SFLDG01019">
    <property type="entry name" value="Terpene_Cyclase_Like_1_C_Termi"/>
    <property type="match status" value="1"/>
</dbReference>
<dbReference type="SFLD" id="SFLDG01014">
    <property type="entry name" value="Terpene_Cyclase_Like_1_N-term"/>
    <property type="match status" value="1"/>
</dbReference>
<dbReference type="SUPFAM" id="SSF48239">
    <property type="entry name" value="Terpenoid cyclases/Protein prenyltransferases"/>
    <property type="match status" value="1"/>
</dbReference>
<dbReference type="SUPFAM" id="SSF48576">
    <property type="entry name" value="Terpenoid synthases"/>
    <property type="match status" value="1"/>
</dbReference>
<name>SBPN2_PINBN</name>
<keyword id="KW-0150">Chloroplast</keyword>
<keyword id="KW-0456">Lyase</keyword>
<keyword id="KW-0460">Magnesium</keyword>
<keyword id="KW-0479">Metal-binding</keyword>
<keyword id="KW-0934">Plastid</keyword>
<keyword id="KW-0809">Transit peptide</keyword>
<gene>
    <name evidence="5" type="primary">TPS-(-)Bpin2</name>
</gene>
<organism>
    <name type="scientific">Pinus banksiana</name>
    <name type="common">Jack pine</name>
    <name type="synonym">Pinus divaricata</name>
    <dbReference type="NCBI Taxonomy" id="3353"/>
    <lineage>
        <taxon>Eukaryota</taxon>
        <taxon>Viridiplantae</taxon>
        <taxon>Streptophyta</taxon>
        <taxon>Embryophyta</taxon>
        <taxon>Tracheophyta</taxon>
        <taxon>Spermatophyta</taxon>
        <taxon>Pinopsida</taxon>
        <taxon>Pinidae</taxon>
        <taxon>Conifers I</taxon>
        <taxon>Pinales</taxon>
        <taxon>Pinaceae</taxon>
        <taxon>Pinus</taxon>
        <taxon>Pinus subgen. Pinus</taxon>
    </lineage>
</organism>
<evidence type="ECO:0000250" key="1">
    <source>
        <dbReference type="UniProtKB" id="A0A1C9J6A7"/>
    </source>
</evidence>
<evidence type="ECO:0000250" key="2">
    <source>
        <dbReference type="UniProtKB" id="Q40577"/>
    </source>
</evidence>
<evidence type="ECO:0000255" key="3"/>
<evidence type="ECO:0000269" key="4">
    <source>
    </source>
</evidence>
<evidence type="ECO:0000303" key="5">
    <source>
    </source>
</evidence>
<evidence type="ECO:0000305" key="6"/>
<accession>R9QMW5</accession>
<comment type="function">
    <text evidence="4">Monoterpene synthase (TPS) involved in the biosynthesis of monoterpene natural products included in conifer oleoresin secretions and volatile emissions; these compounds contribute to biotic and abiotic stress defense against herbivores and pathogens (PubMed:23679205). Catalyzes the conversion of (2E)-geranyl diphosphate (GPP) to (-)-beta-pinene and, to a lower extent, to (-)-alpha-pinene (PubMed:23679205).</text>
</comment>
<comment type="catalytic activity">
    <reaction evidence="4">
        <text>(2E)-geranyl diphosphate = (1S,5S)-beta-pinene + diphosphate</text>
        <dbReference type="Rhea" id="RHEA:25496"/>
        <dbReference type="ChEBI" id="CHEBI:28359"/>
        <dbReference type="ChEBI" id="CHEBI:33019"/>
        <dbReference type="ChEBI" id="CHEBI:58057"/>
        <dbReference type="EC" id="4.2.3.120"/>
    </reaction>
    <physiologicalReaction direction="left-to-right" evidence="4">
        <dbReference type="Rhea" id="RHEA:25497"/>
    </physiologicalReaction>
</comment>
<comment type="catalytic activity">
    <reaction evidence="4">
        <text>(2E)-geranyl diphosphate = (1S,5S)-alpha-pinene + diphosphate</text>
        <dbReference type="Rhea" id="RHEA:25488"/>
        <dbReference type="ChEBI" id="CHEBI:28660"/>
        <dbReference type="ChEBI" id="CHEBI:33019"/>
        <dbReference type="ChEBI" id="CHEBI:58057"/>
        <dbReference type="EC" id="4.2.3.119"/>
    </reaction>
    <physiologicalReaction direction="left-to-right" evidence="4">
        <dbReference type="Rhea" id="RHEA:25489"/>
    </physiologicalReaction>
</comment>
<comment type="cofactor">
    <cofactor evidence="1">
        <name>Mg(2+)</name>
        <dbReference type="ChEBI" id="CHEBI:18420"/>
    </cofactor>
    <cofactor evidence="1">
        <name>Mn(2+)</name>
        <dbReference type="ChEBI" id="CHEBI:29035"/>
    </cofactor>
    <text evidence="1">Binds 3 Mg(2+) or Mn(2+) ions per subunit.</text>
</comment>
<comment type="pathway">
    <text evidence="4">Terpene metabolism; oleoresin biosynthesis.</text>
</comment>
<comment type="pathway">
    <text evidence="4">Secondary metabolite biosynthesis; terpenoid biosynthesis.</text>
</comment>
<comment type="subcellular location">
    <subcellularLocation>
        <location evidence="3">Plastid</location>
        <location evidence="3">Chloroplast</location>
    </subcellularLocation>
</comment>
<comment type="domain">
    <text evidence="6">The Asp-Asp-Xaa-Xaa-Asp/Glu (DDXXD/E) motif is important for the catalytic activity, presumably through binding to Mg(2+).</text>
</comment>
<comment type="similarity">
    <text evidence="6">Belongs to the terpene synthase family. Tpsd subfamily.</text>
</comment>
<protein>
    <recommendedName>
        <fullName evidence="5">(-)-beta-pinene synthase 2, chloroplastic</fullName>
        <ecNumber evidence="4">4.2.3.120</ecNumber>
    </recommendedName>
    <alternativeName>
        <fullName evidence="5">(-)-alpha-pinene synthase (-)betapin2, chloroplastic</fullName>
        <ecNumber evidence="4">4.2.3.119</ecNumber>
    </alternativeName>
    <alternativeName>
        <fullName evidence="5">Terpene synthase (-)betapin2</fullName>
        <shortName evidence="5">PbTPS-(-)betapin2</shortName>
    </alternativeName>
</protein>
<sequence>MDLISVLPSASKSCVCLHKPLSSSTHKLKPFCRKIRILGMPRPRKSVLMVSSMSISVNTLVSDDAVQRRTGGYHSNLWNDDVIQFLSTPYGELAYRERAERLIDEVRNIFSSMSLEDGESSDLIQRLWMVDNVERLGIDRHFKNEIKSALDYVYSYWSQKGIGCGTKSIITDLNSTALGFRILRLHGYPVSAEVFKHFRNQIGQFVSCHSETEEDIRSIVNLYRASLIAFPGEKVMEEAEIFSEKYLKETLQKIPDCSLSREIGDVLEHGWHTNLPRFEARNYMDVFGQDTKNMESNRKAEKLLELAKLEFNIFQSIQKTELESLLRWWNDSGSPQITFTRHRHVEYYTLASCIAFEPQHSGFRLGFAKACHIITVLDDMYDLFGTVEELKLFTAAIKRWDPSATDCLPQYMKGIYMMVYNTVNEMSAEAQKAQRRDTLNYARQAWEVYLDSYMQEAKWIATGYLPTFEEYLENGKVSSGHRVSALQPMLTMDIPFPPHILKEVDFPSNLNDLACAILRLRGDTRCYQEDRARGEETSCISCYMKDNPGATEEDALNHLNVMISGVIKELNWELLKPDSSVPISSKKINFDITRAFHYGYKYRDGYSVSSVETKSLVMRTLLEPVPL</sequence>
<proteinExistence type="evidence at protein level"/>
<reference key="1">
    <citation type="journal article" date="2013" name="BMC Plant Biol.">
        <title>Transcriptome resources and functional characterization of monoterpene synthases for two host species of the mountain pine beetle, lodgepole pine (Pinus contorta) and jack pine (Pinus banksiana).</title>
        <authorList>
            <person name="Hall D.E."/>
            <person name="Yuen M.M.S."/>
            <person name="Jancsik S."/>
            <person name="Quesada A.L."/>
            <person name="Dullat H.K."/>
            <person name="Li M."/>
            <person name="Henderson H."/>
            <person name="Arango-Velez A."/>
            <person name="Liao N.Y."/>
            <person name="Docking R.T."/>
            <person name="Chan S.K."/>
            <person name="Cooke J.E.K."/>
            <person name="Breuil C."/>
            <person name="Jones S.J.M."/>
            <person name="Keeling C.I."/>
            <person name="Bohlmann J."/>
        </authorList>
    </citation>
    <scope>NUCLEOTIDE SEQUENCE [MRNA]</scope>
    <scope>FUNCTION</scope>
    <scope>CATALYTIC ACTIVITY</scope>
    <scope>PATHWAY</scope>
</reference>
<feature type="transit peptide" description="Chloroplast" evidence="3">
    <location>
        <begin position="1"/>
        <end position="51"/>
    </location>
</feature>
<feature type="chain" id="PRO_0000455020" description="(-)-beta-pinene synthase 2, chloroplastic">
    <location>
        <begin position="52"/>
        <end position="627"/>
    </location>
</feature>
<feature type="short sequence motif" description="DDXXD motif" evidence="6">
    <location>
        <begin position="378"/>
        <end position="382"/>
    </location>
</feature>
<feature type="binding site" evidence="2">
    <location>
        <position position="378"/>
    </location>
    <ligand>
        <name>Mg(2+)</name>
        <dbReference type="ChEBI" id="CHEBI:18420"/>
        <label>1</label>
    </ligand>
</feature>
<feature type="binding site" evidence="2">
    <location>
        <position position="378"/>
    </location>
    <ligand>
        <name>Mg(2+)</name>
        <dbReference type="ChEBI" id="CHEBI:18420"/>
        <label>2</label>
    </ligand>
</feature>
<feature type="binding site" evidence="2">
    <location>
        <position position="382"/>
    </location>
    <ligand>
        <name>Mg(2+)</name>
        <dbReference type="ChEBI" id="CHEBI:18420"/>
        <label>1</label>
    </ligand>
</feature>
<feature type="binding site" evidence="2">
    <location>
        <position position="382"/>
    </location>
    <ligand>
        <name>Mg(2+)</name>
        <dbReference type="ChEBI" id="CHEBI:18420"/>
        <label>2</label>
    </ligand>
</feature>
<feature type="binding site" evidence="2">
    <location>
        <position position="530"/>
    </location>
    <ligand>
        <name>Mg(2+)</name>
        <dbReference type="ChEBI" id="CHEBI:18420"/>
        <label>3</label>
    </ligand>
</feature>